<evidence type="ECO:0000255" key="1">
    <source>
        <dbReference type="HAMAP-Rule" id="MF_00272"/>
    </source>
</evidence>
<evidence type="ECO:0000255" key="2">
    <source>
        <dbReference type="PROSITE-ProRule" id="PRU01066"/>
    </source>
</evidence>
<keyword id="KW-0450">Lipoyl</keyword>
<sequence>MSLEYPEDLKYMDSHEYVRLEGEIATIGISAFAVDELGDIVFIEVPAEGEAIAQGETFGTIESVKAVADLYAPVSGTVIENNQAIVDAPEQLAGDPYGEGWLVKVRISDPSELTNALSASEYRAQVEGS</sequence>
<proteinExistence type="inferred from homology"/>
<organism>
    <name type="scientific">Cyanothece sp. (strain PCC 7425 / ATCC 29141)</name>
    <dbReference type="NCBI Taxonomy" id="395961"/>
    <lineage>
        <taxon>Bacteria</taxon>
        <taxon>Bacillati</taxon>
        <taxon>Cyanobacteriota</taxon>
        <taxon>Cyanophyceae</taxon>
        <taxon>Gomontiellales</taxon>
        <taxon>Cyanothecaceae</taxon>
        <taxon>Cyanothece</taxon>
    </lineage>
</organism>
<protein>
    <recommendedName>
        <fullName evidence="1">Glycine cleavage system H protein</fullName>
    </recommendedName>
</protein>
<feature type="chain" id="PRO_1000190199" description="Glycine cleavage system H protein">
    <location>
        <begin position="1"/>
        <end position="129"/>
    </location>
</feature>
<feature type="domain" description="Lipoyl-binding" evidence="2">
    <location>
        <begin position="24"/>
        <end position="106"/>
    </location>
</feature>
<feature type="modified residue" description="N6-lipoyllysine" evidence="1">
    <location>
        <position position="65"/>
    </location>
</feature>
<name>GCSH_CYAP4</name>
<gene>
    <name evidence="1" type="primary">gcvH</name>
    <name type="ordered locus">Cyan7425_2036</name>
</gene>
<comment type="function">
    <text evidence="1">The glycine cleavage system catalyzes the degradation of glycine. The H protein shuttles the methylamine group of glycine from the P protein to the T protein.</text>
</comment>
<comment type="cofactor">
    <cofactor evidence="1">
        <name>(R)-lipoate</name>
        <dbReference type="ChEBI" id="CHEBI:83088"/>
    </cofactor>
    <text evidence="1">Binds 1 lipoyl cofactor covalently.</text>
</comment>
<comment type="subunit">
    <text evidence="1">The glycine cleavage system is composed of four proteins: P, T, L and H.</text>
</comment>
<comment type="similarity">
    <text evidence="1">Belongs to the GcvH family.</text>
</comment>
<accession>B8HU54</accession>
<dbReference type="EMBL" id="CP001344">
    <property type="protein sequence ID" value="ACL44399.1"/>
    <property type="molecule type" value="Genomic_DNA"/>
</dbReference>
<dbReference type="SMR" id="B8HU54"/>
<dbReference type="STRING" id="395961.Cyan7425_2036"/>
<dbReference type="KEGG" id="cyn:Cyan7425_2036"/>
<dbReference type="eggNOG" id="COG0509">
    <property type="taxonomic scope" value="Bacteria"/>
</dbReference>
<dbReference type="HOGENOM" id="CLU_097408_2_2_3"/>
<dbReference type="OrthoDB" id="9796712at2"/>
<dbReference type="GO" id="GO:0005829">
    <property type="term" value="C:cytosol"/>
    <property type="evidence" value="ECO:0007669"/>
    <property type="project" value="TreeGrafter"/>
</dbReference>
<dbReference type="GO" id="GO:0005960">
    <property type="term" value="C:glycine cleavage complex"/>
    <property type="evidence" value="ECO:0007669"/>
    <property type="project" value="InterPro"/>
</dbReference>
<dbReference type="GO" id="GO:0019464">
    <property type="term" value="P:glycine decarboxylation via glycine cleavage system"/>
    <property type="evidence" value="ECO:0007669"/>
    <property type="project" value="UniProtKB-UniRule"/>
</dbReference>
<dbReference type="CDD" id="cd06848">
    <property type="entry name" value="GCS_H"/>
    <property type="match status" value="1"/>
</dbReference>
<dbReference type="Gene3D" id="2.40.50.100">
    <property type="match status" value="1"/>
</dbReference>
<dbReference type="HAMAP" id="MF_00272">
    <property type="entry name" value="GcvH"/>
    <property type="match status" value="1"/>
</dbReference>
<dbReference type="InterPro" id="IPR003016">
    <property type="entry name" value="2-oxoA_DH_lipoyl-BS"/>
</dbReference>
<dbReference type="InterPro" id="IPR000089">
    <property type="entry name" value="Biotin_lipoyl"/>
</dbReference>
<dbReference type="InterPro" id="IPR002930">
    <property type="entry name" value="GCV_H"/>
</dbReference>
<dbReference type="InterPro" id="IPR033753">
    <property type="entry name" value="GCV_H/Fam206"/>
</dbReference>
<dbReference type="InterPro" id="IPR017453">
    <property type="entry name" value="GCV_H_sub"/>
</dbReference>
<dbReference type="InterPro" id="IPR011053">
    <property type="entry name" value="Single_hybrid_motif"/>
</dbReference>
<dbReference type="NCBIfam" id="TIGR00527">
    <property type="entry name" value="gcvH"/>
    <property type="match status" value="1"/>
</dbReference>
<dbReference type="NCBIfam" id="NF002270">
    <property type="entry name" value="PRK01202.1"/>
    <property type="match status" value="1"/>
</dbReference>
<dbReference type="PANTHER" id="PTHR11715">
    <property type="entry name" value="GLYCINE CLEAVAGE SYSTEM H PROTEIN"/>
    <property type="match status" value="1"/>
</dbReference>
<dbReference type="PANTHER" id="PTHR11715:SF3">
    <property type="entry name" value="GLYCINE CLEAVAGE SYSTEM H PROTEIN-RELATED"/>
    <property type="match status" value="1"/>
</dbReference>
<dbReference type="Pfam" id="PF01597">
    <property type="entry name" value="GCV_H"/>
    <property type="match status" value="1"/>
</dbReference>
<dbReference type="SUPFAM" id="SSF51230">
    <property type="entry name" value="Single hybrid motif"/>
    <property type="match status" value="1"/>
</dbReference>
<dbReference type="PROSITE" id="PS50968">
    <property type="entry name" value="BIOTINYL_LIPOYL"/>
    <property type="match status" value="1"/>
</dbReference>
<dbReference type="PROSITE" id="PS00189">
    <property type="entry name" value="LIPOYL"/>
    <property type="match status" value="1"/>
</dbReference>
<reference key="1">
    <citation type="journal article" date="2011" name="MBio">
        <title>Novel metabolic attributes of the genus Cyanothece, comprising a group of unicellular nitrogen-fixing Cyanobacteria.</title>
        <authorList>
            <person name="Bandyopadhyay A."/>
            <person name="Elvitigala T."/>
            <person name="Welsh E."/>
            <person name="Stockel J."/>
            <person name="Liberton M."/>
            <person name="Min H."/>
            <person name="Sherman L.A."/>
            <person name="Pakrasi H.B."/>
        </authorList>
    </citation>
    <scope>NUCLEOTIDE SEQUENCE [LARGE SCALE GENOMIC DNA]</scope>
    <source>
        <strain>PCC 7425 / ATCC 29141</strain>
    </source>
</reference>